<reference key="1">
    <citation type="journal article" date="2010" name="PLoS ONE">
        <title>The complete genome sequence of Cupriavidus metallidurans strain CH34, a master survivalist in harsh and anthropogenic environments.</title>
        <authorList>
            <person name="Janssen P.J."/>
            <person name="Van Houdt R."/>
            <person name="Moors H."/>
            <person name="Monsieurs P."/>
            <person name="Morin N."/>
            <person name="Michaux A."/>
            <person name="Benotmane M.A."/>
            <person name="Leys N."/>
            <person name="Vallaeys T."/>
            <person name="Lapidus A."/>
            <person name="Monchy S."/>
            <person name="Medigue C."/>
            <person name="Taghavi S."/>
            <person name="McCorkle S."/>
            <person name="Dunn J."/>
            <person name="van der Lelie D."/>
            <person name="Mergeay M."/>
        </authorList>
    </citation>
    <scope>NUCLEOTIDE SEQUENCE [LARGE SCALE GENOMIC DNA]</scope>
    <source>
        <strain>ATCC 43123 / DSM 2839 / NBRC 102507 / CH34</strain>
    </source>
</reference>
<name>QUEA_CUPMC</name>
<comment type="function">
    <text evidence="1">Transfers and isomerizes the ribose moiety from AdoMet to the 7-aminomethyl group of 7-deazaguanine (preQ1-tRNA) to give epoxyqueuosine (oQ-tRNA).</text>
</comment>
<comment type="catalytic activity">
    <reaction evidence="1">
        <text>7-aminomethyl-7-carbaguanosine(34) in tRNA + S-adenosyl-L-methionine = epoxyqueuosine(34) in tRNA + adenine + L-methionine + 2 H(+)</text>
        <dbReference type="Rhea" id="RHEA:32155"/>
        <dbReference type="Rhea" id="RHEA-COMP:10342"/>
        <dbReference type="Rhea" id="RHEA-COMP:18582"/>
        <dbReference type="ChEBI" id="CHEBI:15378"/>
        <dbReference type="ChEBI" id="CHEBI:16708"/>
        <dbReference type="ChEBI" id="CHEBI:57844"/>
        <dbReference type="ChEBI" id="CHEBI:59789"/>
        <dbReference type="ChEBI" id="CHEBI:82833"/>
        <dbReference type="ChEBI" id="CHEBI:194443"/>
        <dbReference type="EC" id="2.4.99.17"/>
    </reaction>
</comment>
<comment type="pathway">
    <text evidence="1">tRNA modification; tRNA-queuosine biosynthesis.</text>
</comment>
<comment type="subunit">
    <text evidence="1">Monomer.</text>
</comment>
<comment type="subcellular location">
    <subcellularLocation>
        <location evidence="1">Cytoplasm</location>
    </subcellularLocation>
</comment>
<comment type="similarity">
    <text evidence="1">Belongs to the QueA family.</text>
</comment>
<organism>
    <name type="scientific">Cupriavidus metallidurans (strain ATCC 43123 / DSM 2839 / NBRC 102507 / CH34)</name>
    <name type="common">Ralstonia metallidurans</name>
    <dbReference type="NCBI Taxonomy" id="266264"/>
    <lineage>
        <taxon>Bacteria</taxon>
        <taxon>Pseudomonadati</taxon>
        <taxon>Pseudomonadota</taxon>
        <taxon>Betaproteobacteria</taxon>
        <taxon>Burkholderiales</taxon>
        <taxon>Burkholderiaceae</taxon>
        <taxon>Cupriavidus</taxon>
    </lineage>
</organism>
<proteinExistence type="inferred from homology"/>
<keyword id="KW-0963">Cytoplasm</keyword>
<keyword id="KW-0671">Queuosine biosynthesis</keyword>
<keyword id="KW-1185">Reference proteome</keyword>
<keyword id="KW-0949">S-adenosyl-L-methionine</keyword>
<keyword id="KW-0808">Transferase</keyword>
<accession>Q1LJ60</accession>
<protein>
    <recommendedName>
        <fullName evidence="1">S-adenosylmethionine:tRNA ribosyltransferase-isomerase</fullName>
        <ecNumber evidence="1">2.4.99.17</ecNumber>
    </recommendedName>
    <alternativeName>
        <fullName evidence="1">Queuosine biosynthesis protein QueA</fullName>
    </alternativeName>
</protein>
<gene>
    <name evidence="1" type="primary">queA</name>
    <name type="ordered locus">Rmet_2943</name>
</gene>
<evidence type="ECO:0000255" key="1">
    <source>
        <dbReference type="HAMAP-Rule" id="MF_00113"/>
    </source>
</evidence>
<feature type="chain" id="PRO_1000015253" description="S-adenosylmethionine:tRNA ribosyltransferase-isomerase">
    <location>
        <begin position="1"/>
        <end position="353"/>
    </location>
</feature>
<dbReference type="EC" id="2.4.99.17" evidence="1"/>
<dbReference type="EMBL" id="CP000352">
    <property type="protein sequence ID" value="ABF09816.1"/>
    <property type="molecule type" value="Genomic_DNA"/>
</dbReference>
<dbReference type="RefSeq" id="WP_011517483.1">
    <property type="nucleotide sequence ID" value="NC_007973.1"/>
</dbReference>
<dbReference type="SMR" id="Q1LJ60"/>
<dbReference type="STRING" id="266264.Rmet_2943"/>
<dbReference type="KEGG" id="rme:Rmet_2943"/>
<dbReference type="eggNOG" id="COG0809">
    <property type="taxonomic scope" value="Bacteria"/>
</dbReference>
<dbReference type="HOGENOM" id="CLU_039110_1_0_4"/>
<dbReference type="UniPathway" id="UPA00392"/>
<dbReference type="Proteomes" id="UP000002429">
    <property type="component" value="Chromosome"/>
</dbReference>
<dbReference type="GO" id="GO:0005737">
    <property type="term" value="C:cytoplasm"/>
    <property type="evidence" value="ECO:0007669"/>
    <property type="project" value="UniProtKB-SubCell"/>
</dbReference>
<dbReference type="GO" id="GO:0051075">
    <property type="term" value="F:S-adenosylmethionine:tRNA ribosyltransferase-isomerase activity"/>
    <property type="evidence" value="ECO:0007669"/>
    <property type="project" value="UniProtKB-EC"/>
</dbReference>
<dbReference type="GO" id="GO:0008616">
    <property type="term" value="P:queuosine biosynthetic process"/>
    <property type="evidence" value="ECO:0007669"/>
    <property type="project" value="UniProtKB-UniRule"/>
</dbReference>
<dbReference type="GO" id="GO:0002099">
    <property type="term" value="P:tRNA wobble guanine modification"/>
    <property type="evidence" value="ECO:0007669"/>
    <property type="project" value="TreeGrafter"/>
</dbReference>
<dbReference type="FunFam" id="3.40.1780.10:FF:000001">
    <property type="entry name" value="S-adenosylmethionine:tRNA ribosyltransferase-isomerase"/>
    <property type="match status" value="1"/>
</dbReference>
<dbReference type="Gene3D" id="2.40.10.240">
    <property type="entry name" value="QueA-like"/>
    <property type="match status" value="1"/>
</dbReference>
<dbReference type="Gene3D" id="3.40.1780.10">
    <property type="entry name" value="QueA-like"/>
    <property type="match status" value="1"/>
</dbReference>
<dbReference type="HAMAP" id="MF_00113">
    <property type="entry name" value="QueA"/>
    <property type="match status" value="1"/>
</dbReference>
<dbReference type="InterPro" id="IPR003699">
    <property type="entry name" value="QueA"/>
</dbReference>
<dbReference type="InterPro" id="IPR042118">
    <property type="entry name" value="QueA_dom1"/>
</dbReference>
<dbReference type="InterPro" id="IPR042119">
    <property type="entry name" value="QueA_dom2"/>
</dbReference>
<dbReference type="InterPro" id="IPR036100">
    <property type="entry name" value="QueA_sf"/>
</dbReference>
<dbReference type="NCBIfam" id="NF001140">
    <property type="entry name" value="PRK00147.1"/>
    <property type="match status" value="1"/>
</dbReference>
<dbReference type="NCBIfam" id="TIGR00113">
    <property type="entry name" value="queA"/>
    <property type="match status" value="1"/>
</dbReference>
<dbReference type="PANTHER" id="PTHR30307">
    <property type="entry name" value="S-ADENOSYLMETHIONINE:TRNA RIBOSYLTRANSFERASE-ISOMERASE"/>
    <property type="match status" value="1"/>
</dbReference>
<dbReference type="PANTHER" id="PTHR30307:SF0">
    <property type="entry name" value="S-ADENOSYLMETHIONINE:TRNA RIBOSYLTRANSFERASE-ISOMERASE"/>
    <property type="match status" value="1"/>
</dbReference>
<dbReference type="Pfam" id="PF02547">
    <property type="entry name" value="Queuosine_synth"/>
    <property type="match status" value="1"/>
</dbReference>
<dbReference type="SUPFAM" id="SSF111337">
    <property type="entry name" value="QueA-like"/>
    <property type="match status" value="1"/>
</dbReference>
<sequence>MLTLSDFDFPLPPELIAQSALPDRSASRLLVVERTAPEDTSEAVRLVDRAFSDILEYLNPDDLLVFNDTRVIKARFFGHKPSGGRIEVLVERVVDTHTVLAQVRASKTPVEGSLLHLADDAFAVTVGPRVDQFFTLRFPEPALDLIERYGRLPLPPYITHDPDAYDETRYQTVYARNPGAVAAPTAGLHFDDALFARLDAAGIRRAFLTLHVGAGTFQPVRTENLSEHKMHSEWYAISPELADAVRETRARGGRVIAVGTTSLRALESAAAEDGTLEAGSGDTDIFITPGYAFRIVDALITNFHLPKSTLLMLVSALAGVEAIRDAYRHAVDARYRFFSYGDAMLLTRRDRRA</sequence>